<reference key="1">
    <citation type="journal article" date="2002" name="Proc. Natl. Acad. Sci. U.S.A.">
        <title>The Brucella suis genome reveals fundamental similarities between animal and plant pathogens and symbionts.</title>
        <authorList>
            <person name="Paulsen I.T."/>
            <person name="Seshadri R."/>
            <person name="Nelson K.E."/>
            <person name="Eisen J.A."/>
            <person name="Heidelberg J.F."/>
            <person name="Read T.D."/>
            <person name="Dodson R.J."/>
            <person name="Umayam L.A."/>
            <person name="Brinkac L.M."/>
            <person name="Beanan M.J."/>
            <person name="Daugherty S.C."/>
            <person name="DeBoy R.T."/>
            <person name="Durkin A.S."/>
            <person name="Kolonay J.F."/>
            <person name="Madupu R."/>
            <person name="Nelson W.C."/>
            <person name="Ayodeji B."/>
            <person name="Kraul M."/>
            <person name="Shetty J."/>
            <person name="Malek J.A."/>
            <person name="Van Aken S.E."/>
            <person name="Riedmuller S."/>
            <person name="Tettelin H."/>
            <person name="Gill S.R."/>
            <person name="White O."/>
            <person name="Salzberg S.L."/>
            <person name="Hoover D.L."/>
            <person name="Lindler L.E."/>
            <person name="Halling S.M."/>
            <person name="Boyle S.M."/>
            <person name="Fraser C.M."/>
        </authorList>
    </citation>
    <scope>NUCLEOTIDE SEQUENCE [LARGE SCALE GENOMIC DNA]</scope>
    <source>
        <strain>1330</strain>
    </source>
</reference>
<reference key="2">
    <citation type="journal article" date="2011" name="J. Bacteriol.">
        <title>Revised genome sequence of Brucella suis 1330.</title>
        <authorList>
            <person name="Tae H."/>
            <person name="Shallom S."/>
            <person name="Settlage R."/>
            <person name="Preston D."/>
            <person name="Adams L.G."/>
            <person name="Garner H.R."/>
        </authorList>
    </citation>
    <scope>NUCLEOTIDE SEQUENCE [LARGE SCALE GENOMIC DNA]</scope>
    <source>
        <strain>1330</strain>
    </source>
</reference>
<evidence type="ECO:0000255" key="1">
    <source>
        <dbReference type="HAMAP-Rule" id="MF_00323"/>
    </source>
</evidence>
<feature type="chain" id="PRO_0000175122" description="Ferrochelatase">
    <location>
        <begin position="1"/>
        <end position="352"/>
    </location>
</feature>
<feature type="binding site" evidence="1">
    <location>
        <position position="222"/>
    </location>
    <ligand>
        <name>Fe cation</name>
        <dbReference type="ChEBI" id="CHEBI:24875"/>
    </ligand>
</feature>
<feature type="binding site" evidence="1">
    <location>
        <position position="303"/>
    </location>
    <ligand>
        <name>Fe cation</name>
        <dbReference type="ChEBI" id="CHEBI:24875"/>
    </ligand>
</feature>
<dbReference type="EC" id="4.98.1.1" evidence="1"/>
<dbReference type="EMBL" id="AE014292">
    <property type="protein sequence ID" value="AAN33288.1"/>
    <property type="molecule type" value="Genomic_DNA"/>
</dbReference>
<dbReference type="EMBL" id="CP002998">
    <property type="protein sequence ID" value="AEM19568.1"/>
    <property type="molecule type" value="Genomic_DNA"/>
</dbReference>
<dbReference type="RefSeq" id="WP_004681236.1">
    <property type="nucleotide sequence ID" value="NZ_KN046805.1"/>
</dbReference>
<dbReference type="SMR" id="P0A3D7"/>
<dbReference type="GeneID" id="97535704"/>
<dbReference type="KEGG" id="bms:BRA0076"/>
<dbReference type="KEGG" id="bsi:BS1330_II0076"/>
<dbReference type="PATRIC" id="fig|204722.21.peg.3534"/>
<dbReference type="HOGENOM" id="CLU_018884_0_0_5"/>
<dbReference type="PhylomeDB" id="P0A3D7"/>
<dbReference type="UniPathway" id="UPA00252">
    <property type="reaction ID" value="UER00325"/>
</dbReference>
<dbReference type="PRO" id="PR:P0A3D7"/>
<dbReference type="Proteomes" id="UP000007104">
    <property type="component" value="Chromosome II"/>
</dbReference>
<dbReference type="GO" id="GO:0005737">
    <property type="term" value="C:cytoplasm"/>
    <property type="evidence" value="ECO:0007669"/>
    <property type="project" value="UniProtKB-SubCell"/>
</dbReference>
<dbReference type="GO" id="GO:0004325">
    <property type="term" value="F:ferrochelatase activity"/>
    <property type="evidence" value="ECO:0007669"/>
    <property type="project" value="UniProtKB-UniRule"/>
</dbReference>
<dbReference type="GO" id="GO:0046872">
    <property type="term" value="F:metal ion binding"/>
    <property type="evidence" value="ECO:0007669"/>
    <property type="project" value="UniProtKB-KW"/>
</dbReference>
<dbReference type="GO" id="GO:0006783">
    <property type="term" value="P:heme biosynthetic process"/>
    <property type="evidence" value="ECO:0007669"/>
    <property type="project" value="UniProtKB-UniRule"/>
</dbReference>
<dbReference type="CDD" id="cd00419">
    <property type="entry name" value="Ferrochelatase_C"/>
    <property type="match status" value="1"/>
</dbReference>
<dbReference type="CDD" id="cd03411">
    <property type="entry name" value="Ferrochelatase_N"/>
    <property type="match status" value="1"/>
</dbReference>
<dbReference type="FunFam" id="3.40.50.1400:FF:000002">
    <property type="entry name" value="Ferrochelatase"/>
    <property type="match status" value="1"/>
</dbReference>
<dbReference type="Gene3D" id="3.40.50.1400">
    <property type="match status" value="2"/>
</dbReference>
<dbReference type="HAMAP" id="MF_00323">
    <property type="entry name" value="Ferrochelatase"/>
    <property type="match status" value="1"/>
</dbReference>
<dbReference type="InterPro" id="IPR001015">
    <property type="entry name" value="Ferrochelatase"/>
</dbReference>
<dbReference type="InterPro" id="IPR019772">
    <property type="entry name" value="Ferrochelatase_AS"/>
</dbReference>
<dbReference type="InterPro" id="IPR033644">
    <property type="entry name" value="Ferrochelatase_C"/>
</dbReference>
<dbReference type="InterPro" id="IPR033659">
    <property type="entry name" value="Ferrochelatase_N"/>
</dbReference>
<dbReference type="NCBIfam" id="TIGR00109">
    <property type="entry name" value="hemH"/>
    <property type="match status" value="1"/>
</dbReference>
<dbReference type="PANTHER" id="PTHR11108">
    <property type="entry name" value="FERROCHELATASE"/>
    <property type="match status" value="1"/>
</dbReference>
<dbReference type="PANTHER" id="PTHR11108:SF1">
    <property type="entry name" value="FERROCHELATASE, MITOCHONDRIAL"/>
    <property type="match status" value="1"/>
</dbReference>
<dbReference type="Pfam" id="PF00762">
    <property type="entry name" value="Ferrochelatase"/>
    <property type="match status" value="1"/>
</dbReference>
<dbReference type="SUPFAM" id="SSF53800">
    <property type="entry name" value="Chelatase"/>
    <property type="match status" value="1"/>
</dbReference>
<dbReference type="PROSITE" id="PS00534">
    <property type="entry name" value="FERROCHELATASE"/>
    <property type="match status" value="1"/>
</dbReference>
<protein>
    <recommendedName>
        <fullName evidence="1">Ferrochelatase</fullName>
        <ecNumber evidence="1">4.98.1.1</ecNumber>
    </recommendedName>
    <alternativeName>
        <fullName evidence="1">Heme synthase</fullName>
    </alternativeName>
    <alternativeName>
        <fullName evidence="1">Protoheme ferro-lyase</fullName>
    </alternativeName>
</protein>
<proteinExistence type="inferred from homology"/>
<name>HEMH_BRUSU</name>
<gene>
    <name evidence="1" type="primary">hemH</name>
    <name type="ordered locus">BRA0076</name>
    <name type="ordered locus">BS1330_II0076</name>
</gene>
<keyword id="KW-0963">Cytoplasm</keyword>
<keyword id="KW-0350">Heme biosynthesis</keyword>
<keyword id="KW-0408">Iron</keyword>
<keyword id="KW-0456">Lyase</keyword>
<keyword id="KW-0479">Metal-binding</keyword>
<keyword id="KW-0627">Porphyrin biosynthesis</keyword>
<organism>
    <name type="scientific">Brucella suis biovar 1 (strain 1330)</name>
    <dbReference type="NCBI Taxonomy" id="204722"/>
    <lineage>
        <taxon>Bacteria</taxon>
        <taxon>Pseudomonadati</taxon>
        <taxon>Pseudomonadota</taxon>
        <taxon>Alphaproteobacteria</taxon>
        <taxon>Hyphomicrobiales</taxon>
        <taxon>Brucellaceae</taxon>
        <taxon>Brucella/Ochrobactrum group</taxon>
        <taxon>Brucella</taxon>
    </lineage>
</organism>
<accession>P0A3D7</accession>
<accession>G0KES4</accession>
<accession>Q939N8</accession>
<accession>Q93TG2</accession>
<sequence>MSGTDKVRVNVSQTAQTPLHTSAKLPKVGVLLVNLGTPDGTSYGPMRRYLAEFLSDRRVIEWSRLIWYPILYGIVLNTRPRRSGRLYDRIWNHENNESPLRTYTRAQGEKLAKALSDQPNVVVDWAMRYGQPSIESITDRLLQQGCERIVIFPLYPQYSATTTATVNDKFFEALMKKRFMPAIRTVPSYEAEPVYIDALARSVEKHLATLSFKPEVILTSYHGIPKSYSDKGDPYRQQCLETTRLLRERLGLGEDEMRATFQSRFGPEEWLQPYTDETVKELAKNGVKSVAVLNPGFVADCLETVDEIGNEAAEEFLENGGENFSHIPCLNDSEEGMKVIETLVRRELLGWV</sequence>
<comment type="function">
    <text evidence="1">Catalyzes the ferrous insertion into protoporphyrin IX.</text>
</comment>
<comment type="catalytic activity">
    <reaction evidence="1">
        <text>heme b + 2 H(+) = protoporphyrin IX + Fe(2+)</text>
        <dbReference type="Rhea" id="RHEA:22584"/>
        <dbReference type="ChEBI" id="CHEBI:15378"/>
        <dbReference type="ChEBI" id="CHEBI:29033"/>
        <dbReference type="ChEBI" id="CHEBI:57306"/>
        <dbReference type="ChEBI" id="CHEBI:60344"/>
        <dbReference type="EC" id="4.98.1.1"/>
    </reaction>
</comment>
<comment type="pathway">
    <text evidence="1">Porphyrin-containing compound metabolism; protoheme biosynthesis; protoheme from protoporphyrin-IX: step 1/1.</text>
</comment>
<comment type="subcellular location">
    <subcellularLocation>
        <location evidence="1">Cytoplasm</location>
    </subcellularLocation>
</comment>
<comment type="similarity">
    <text evidence="1">Belongs to the ferrochelatase family.</text>
</comment>